<gene>
    <name evidence="3" type="primary">FRAA1D</name>
</gene>
<keyword id="KW-0020">Allergen</keyword>
<keyword id="KW-0568">Pathogenesis-related protein</keyword>
<keyword id="KW-0611">Plant defense</keyword>
<comment type="subunit">
    <text evidence="1">Monomer.</text>
</comment>
<comment type="allergen">
    <text evidence="2">May cause an allergic reaction in human (By similarity). Binds to IgE of patients allergic to strawberry (By similarity).</text>
</comment>
<comment type="similarity">
    <text evidence="4">Belongs to the BetVI family.</text>
</comment>
<organism>
    <name type="scientific">Fragaria ananassa</name>
    <name type="common">Strawberry</name>
    <name type="synonym">Fragaria chiloensis x Fragaria virginiana</name>
    <dbReference type="NCBI Taxonomy" id="3747"/>
    <lineage>
        <taxon>Eukaryota</taxon>
        <taxon>Viridiplantae</taxon>
        <taxon>Streptophyta</taxon>
        <taxon>Embryophyta</taxon>
        <taxon>Tracheophyta</taxon>
        <taxon>Spermatophyta</taxon>
        <taxon>Magnoliopsida</taxon>
        <taxon>eudicotyledons</taxon>
        <taxon>Gunneridae</taxon>
        <taxon>Pentapetalae</taxon>
        <taxon>rosids</taxon>
        <taxon>fabids</taxon>
        <taxon>Rosales</taxon>
        <taxon>Rosaceae</taxon>
        <taxon>Rosoideae</taxon>
        <taxon>Potentilleae</taxon>
        <taxon>Fragariinae</taxon>
        <taxon>Fragaria</taxon>
    </lineage>
</organism>
<sequence length="160" mass="17770">MGGYTYENEFTSDIPAPKLFKAFVLDADNLIPKIAPQAIKCAEILEGDGGPGTIKKITFGEGSHYGYVKHKIHSIDKENHTYSYSLIEGDALSDNIEKIDYETKLVSAPHGGTIIKTTSKYHTKGDVEIKEEHVKAGKEKASHLFKLIEGYLKDHPSEYN</sequence>
<proteinExistence type="inferred from homology"/>
<reference key="1">
    <citation type="journal article" date="2007" name="Mol. Immunol.">
        <title>Cloning and sequencing of the Bet v 1-homologous allergen Fra a 1 in strawberry (Fragaria ananassa) shows the presence of an intron and little variability in amino acid sequence.</title>
        <authorList>
            <person name="Musidlowska-Persson A."/>
            <person name="Alm R."/>
            <person name="Emanuelsson C."/>
        </authorList>
    </citation>
    <scope>NUCLEOTIDE SEQUENCE [GENOMIC DNA]</scope>
    <source>
        <tissue>Leaf</tissue>
    </source>
</reference>
<accession>Q256S6</accession>
<protein>
    <recommendedName>
        <fullName evidence="3">Major strawberry allergen Fra a 1-D</fullName>
    </recommendedName>
    <alternativeName>
        <fullName evidence="4">Fra a 1.01D</fullName>
    </alternativeName>
    <allergenName evidence="4">Fra a 1</allergenName>
</protein>
<evidence type="ECO:0000250" key="1">
    <source>
        <dbReference type="UniProtKB" id="Q256S2"/>
    </source>
</evidence>
<evidence type="ECO:0000250" key="2">
    <source>
        <dbReference type="UniProtKB" id="Q5ULZ4"/>
    </source>
</evidence>
<evidence type="ECO:0000303" key="3">
    <source>
    </source>
</evidence>
<evidence type="ECO:0000305" key="4"/>
<dbReference type="EMBL" id="AM236316">
    <property type="protein sequence ID" value="CAJ85642.1"/>
    <property type="molecule type" value="Genomic_DNA"/>
</dbReference>
<dbReference type="SMR" id="Q256S6"/>
<dbReference type="Allergome" id="2124">
    <property type="allergen name" value="Fra a 1"/>
</dbReference>
<dbReference type="GO" id="GO:0005737">
    <property type="term" value="C:cytoplasm"/>
    <property type="evidence" value="ECO:0007669"/>
    <property type="project" value="TreeGrafter"/>
</dbReference>
<dbReference type="GO" id="GO:0005634">
    <property type="term" value="C:nucleus"/>
    <property type="evidence" value="ECO:0007669"/>
    <property type="project" value="TreeGrafter"/>
</dbReference>
<dbReference type="GO" id="GO:0010427">
    <property type="term" value="F:abscisic acid binding"/>
    <property type="evidence" value="ECO:0007669"/>
    <property type="project" value="InterPro"/>
</dbReference>
<dbReference type="GO" id="GO:0004864">
    <property type="term" value="F:protein phosphatase inhibitor activity"/>
    <property type="evidence" value="ECO:0007669"/>
    <property type="project" value="InterPro"/>
</dbReference>
<dbReference type="GO" id="GO:0038023">
    <property type="term" value="F:signaling receptor activity"/>
    <property type="evidence" value="ECO:0007669"/>
    <property type="project" value="InterPro"/>
</dbReference>
<dbReference type="GO" id="GO:0009738">
    <property type="term" value="P:abscisic acid-activated signaling pathway"/>
    <property type="evidence" value="ECO:0007669"/>
    <property type="project" value="InterPro"/>
</dbReference>
<dbReference type="GO" id="GO:0006952">
    <property type="term" value="P:defense response"/>
    <property type="evidence" value="ECO:0007669"/>
    <property type="project" value="UniProtKB-KW"/>
</dbReference>
<dbReference type="CDD" id="cd07816">
    <property type="entry name" value="Bet_v1-like"/>
    <property type="match status" value="1"/>
</dbReference>
<dbReference type="FunFam" id="3.30.530.20:FF:000007">
    <property type="entry name" value="Major pollen allergen Bet v 1-A"/>
    <property type="match status" value="1"/>
</dbReference>
<dbReference type="Gene3D" id="3.30.530.20">
    <property type="match status" value="1"/>
</dbReference>
<dbReference type="InterPro" id="IPR000916">
    <property type="entry name" value="Bet_v_I/MLP"/>
</dbReference>
<dbReference type="InterPro" id="IPR024949">
    <property type="entry name" value="Bet_v_I_allergen"/>
</dbReference>
<dbReference type="InterPro" id="IPR050279">
    <property type="entry name" value="Plant_def-hormone_signal"/>
</dbReference>
<dbReference type="InterPro" id="IPR023393">
    <property type="entry name" value="START-like_dom_sf"/>
</dbReference>
<dbReference type="PANTHER" id="PTHR31213">
    <property type="entry name" value="OS08G0374000 PROTEIN-RELATED"/>
    <property type="match status" value="1"/>
</dbReference>
<dbReference type="PANTHER" id="PTHR31213:SF55">
    <property type="entry name" value="STRESS-INDUCED PROTEIN SAM22"/>
    <property type="match status" value="1"/>
</dbReference>
<dbReference type="Pfam" id="PF00407">
    <property type="entry name" value="Bet_v_1"/>
    <property type="match status" value="1"/>
</dbReference>
<dbReference type="PRINTS" id="PR00634">
    <property type="entry name" value="BETALLERGEN"/>
</dbReference>
<dbReference type="SUPFAM" id="SSF55961">
    <property type="entry name" value="Bet v1-like"/>
    <property type="match status" value="1"/>
</dbReference>
<name>FRA1D_FRAAN</name>
<feature type="chain" id="PRO_0000447011" description="Major strawberry allergen Fra a 1-D">
    <location>
        <begin position="1"/>
        <end position="160"/>
    </location>
</feature>